<protein>
    <recommendedName>
        <fullName>Feather beta keratin</fullName>
        <shortName>F-ker</shortName>
    </recommendedName>
</protein>
<name>KRFB_CATAU</name>
<comment type="subunit">
    <text>The avian keratins (F-ker, S-ker, C-ker and B-ker) are a complex mixture of very similar polypeptides.</text>
</comment>
<comment type="similarity">
    <text evidence="2">Belongs to the avian keratin family.</text>
</comment>
<keyword id="KW-0007">Acetylation</keyword>
<keyword id="KW-0416">Keratin</keyword>
<organism>
    <name type="scientific">Cathartes aura</name>
    <name type="common">Turkey vulture</name>
    <name type="synonym">Vultur aura</name>
    <dbReference type="NCBI Taxonomy" id="43455"/>
    <lineage>
        <taxon>Eukaryota</taxon>
        <taxon>Metazoa</taxon>
        <taxon>Chordata</taxon>
        <taxon>Craniata</taxon>
        <taxon>Vertebrata</taxon>
        <taxon>Euteleostomi</taxon>
        <taxon>Archelosauria</taxon>
        <taxon>Archosauria</taxon>
        <taxon>Dinosauria</taxon>
        <taxon>Saurischia</taxon>
        <taxon>Theropoda</taxon>
        <taxon>Coelurosauria</taxon>
        <taxon>Aves</taxon>
        <taxon>Neognathae</taxon>
        <taxon>Neoaves</taxon>
        <taxon>Telluraves</taxon>
        <taxon>Accipitrimorphae</taxon>
        <taxon>Accipitriformes</taxon>
        <taxon>Cathartidae</taxon>
        <taxon>Cathartes</taxon>
    </lineage>
</organism>
<proteinExistence type="inferred from homology"/>
<accession>Q98U06</accession>
<feature type="initiator methionine" description="Removed" evidence="1">
    <location>
        <position position="1"/>
    </location>
</feature>
<feature type="chain" id="PRO_0000096996" description="Feather beta keratin">
    <location>
        <begin position="2"/>
        <end position="98"/>
    </location>
</feature>
<feature type="modified residue" description="N-acetylserine" evidence="1">
    <location>
        <position position="2"/>
    </location>
</feature>
<dbReference type="EMBL" id="AF308826">
    <property type="protein sequence ID" value="AAG59864.1"/>
    <property type="molecule type" value="Genomic_DNA"/>
</dbReference>
<dbReference type="GO" id="GO:0005882">
    <property type="term" value="C:intermediate filament"/>
    <property type="evidence" value="ECO:0007669"/>
    <property type="project" value="UniProtKB-KW"/>
</dbReference>
<dbReference type="GO" id="GO:0005200">
    <property type="term" value="F:structural constituent of cytoskeleton"/>
    <property type="evidence" value="ECO:0007669"/>
    <property type="project" value="InterPro"/>
</dbReference>
<dbReference type="InterPro" id="IPR003461">
    <property type="entry name" value="Keratin"/>
</dbReference>
<dbReference type="PANTHER" id="PTHR31203">
    <property type="entry name" value="BETA-KERATIN-RELATED PROTEIN-RELATED"/>
    <property type="match status" value="1"/>
</dbReference>
<dbReference type="PANTHER" id="PTHR31203:SF1">
    <property type="entry name" value="BETA-KERATIN-RELATED PROTEIN-RELATED"/>
    <property type="match status" value="1"/>
</dbReference>
<dbReference type="Pfam" id="PF02422">
    <property type="entry name" value="Keratin"/>
    <property type="match status" value="1"/>
</dbReference>
<reference key="1">
    <citation type="submission" date="2000-09" db="EMBL/GenBank/DDBJ databases">
        <title>Feather beta keratin in the developing avian scale.</title>
        <authorList>
            <person name="Sawyer R.H."/>
            <person name="Salvatore B.A."/>
            <person name="Knapp L."/>
            <person name="Potylick T.-T.F."/>
            <person name="French J.O."/>
            <person name="Glenn T.C."/>
        </authorList>
    </citation>
    <scope>NUCLEOTIDE SEQUENCE [GENOMIC DNA]</scope>
</reference>
<sequence length="98" mass="10203">MSCYDLCRPCGPTPLANSCNEPCVRQCQDSRVIIEPSPVVVTLPGPILSSFPQNTAVGSTTSAAVGSILSEEGVPINSGGFNLSGLGGHYYSRRCLPC</sequence>
<evidence type="ECO:0000250" key="1"/>
<evidence type="ECO:0000305" key="2"/>